<comment type="function">
    <text evidence="1">May be involved in gonadal development.</text>
</comment>
<comment type="subcellular location">
    <subcellularLocation>
        <location evidence="2">Nucleus</location>
    </subcellularLocation>
</comment>
<comment type="developmental stage">
    <text evidence="5">Expressed in the limb mesenchyme throughout stages 16 to 32. Expressed in the prospective wing bud at stage 16. Expressed in the leg bud at stage 17. Expressed in the forebrain throughout stages 14 to 21.</text>
</comment>
<comment type="sequence caution" evidence="6">
    <conflict type="erroneous initiation">
        <sequence resource="EMBL-CDS" id="AAA50258"/>
    </conflict>
</comment>
<sequence>MEIVGCRAEENTCPFRPPAMLFHGISGGHIQGIMEEMERRSKTESRLAKGGQMNGRETNMPPMSPEKPALCAGCGGKISDRYYLLAVDKQWHLRCLKCCECKLALESELTCFAKDGSIYCKEDYYRRFSVQRCARCHLGISASEMVMRARESVYHLSCFTCTTCNKTLTTGDHFGMKDNLVYCRAHFESLLQGEYPPQLSYTELAAKSGGLALPYFNGTGTVQKGRPRKRKSPALGVDIVNYNSGCNENEADHMDRDQQPYPPSQKTKRMATSFKHHQLRTMKSYFAINHNPDAKDLKQLAQKTGLTKRVLQVWFQNARAKFRRNLLRQENGGVDKADGTSLPAPPSADSGALTPPGTATTLTDLTNPTITVVTSVTSNLDSHEPGSPSQTTLTNLF</sequence>
<keyword id="KW-0238">DNA-binding</keyword>
<keyword id="KW-0371">Homeobox</keyword>
<keyword id="KW-0440">LIM domain</keyword>
<keyword id="KW-0479">Metal-binding</keyword>
<keyword id="KW-0539">Nucleus</keyword>
<keyword id="KW-1185">Reference proteome</keyword>
<keyword id="KW-0677">Repeat</keyword>
<keyword id="KW-0862">Zinc</keyword>
<organism>
    <name type="scientific">Gallus gallus</name>
    <name type="common">Chicken</name>
    <dbReference type="NCBI Taxonomy" id="9031"/>
    <lineage>
        <taxon>Eukaryota</taxon>
        <taxon>Metazoa</taxon>
        <taxon>Chordata</taxon>
        <taxon>Craniata</taxon>
        <taxon>Vertebrata</taxon>
        <taxon>Euteleostomi</taxon>
        <taxon>Archelosauria</taxon>
        <taxon>Archosauria</taxon>
        <taxon>Dinosauria</taxon>
        <taxon>Saurischia</taxon>
        <taxon>Theropoda</taxon>
        <taxon>Coelurosauria</taxon>
        <taxon>Aves</taxon>
        <taxon>Neognathae</taxon>
        <taxon>Galloanserae</taxon>
        <taxon>Galliformes</taxon>
        <taxon>Phasianidae</taxon>
        <taxon>Phasianinae</taxon>
        <taxon>Gallus</taxon>
    </lineage>
</organism>
<accession>Q90881</accession>
<feature type="chain" id="PRO_0000364229" description="LIM/homeobox protein Lhx9">
    <location>
        <begin position="1"/>
        <end position="397"/>
    </location>
</feature>
<feature type="domain" description="LIM zinc-binding 1" evidence="3">
    <location>
        <begin position="69"/>
        <end position="130"/>
    </location>
</feature>
<feature type="domain" description="LIM zinc-binding 2" evidence="3">
    <location>
        <begin position="131"/>
        <end position="193"/>
    </location>
</feature>
<feature type="DNA-binding region" description="Homeobox" evidence="2">
    <location>
        <begin position="267"/>
        <end position="326"/>
    </location>
</feature>
<feature type="region of interest" description="Disordered" evidence="4">
    <location>
        <begin position="40"/>
        <end position="60"/>
    </location>
</feature>
<feature type="region of interest" description="Disordered" evidence="4">
    <location>
        <begin position="330"/>
        <end position="363"/>
    </location>
</feature>
<feature type="region of interest" description="Disordered" evidence="4">
    <location>
        <begin position="378"/>
        <end position="397"/>
    </location>
</feature>
<feature type="compositionally biased region" description="Low complexity" evidence="4">
    <location>
        <begin position="353"/>
        <end position="363"/>
    </location>
</feature>
<feature type="compositionally biased region" description="Polar residues" evidence="4">
    <location>
        <begin position="387"/>
        <end position="397"/>
    </location>
</feature>
<gene>
    <name type="primary">LHX9</name>
    <name type="synonym">LH-2A</name>
</gene>
<proteinExistence type="evidence at transcript level"/>
<protein>
    <recommendedName>
        <fullName>LIM/homeobox protein Lhx9</fullName>
        <shortName>LIM homeobox protein 9</shortName>
    </recommendedName>
</protein>
<evidence type="ECO:0000250" key="1"/>
<evidence type="ECO:0000255" key="2">
    <source>
        <dbReference type="PROSITE-ProRule" id="PRU00108"/>
    </source>
</evidence>
<evidence type="ECO:0000255" key="3">
    <source>
        <dbReference type="PROSITE-ProRule" id="PRU00125"/>
    </source>
</evidence>
<evidence type="ECO:0000256" key="4">
    <source>
        <dbReference type="SAM" id="MobiDB-lite"/>
    </source>
</evidence>
<evidence type="ECO:0000269" key="5">
    <source>
    </source>
</evidence>
<evidence type="ECO:0000305" key="6"/>
<dbReference type="EMBL" id="L35566">
    <property type="protein sequence ID" value="AAA50258.1"/>
    <property type="status" value="ALT_INIT"/>
    <property type="molecule type" value="mRNA"/>
</dbReference>
<dbReference type="PIR" id="JC5658">
    <property type="entry name" value="JC5658"/>
</dbReference>
<dbReference type="RefSeq" id="NP_990757.1">
    <property type="nucleotide sequence ID" value="NM_205426.1"/>
</dbReference>
<dbReference type="SMR" id="Q90881"/>
<dbReference type="FunCoup" id="Q90881">
    <property type="interactions" value="6"/>
</dbReference>
<dbReference type="STRING" id="9031.ENSGALP00000071664"/>
<dbReference type="PaxDb" id="9031-ENSGALP00000003475"/>
<dbReference type="GeneID" id="396397"/>
<dbReference type="KEGG" id="gga:396397"/>
<dbReference type="CTD" id="56956"/>
<dbReference type="VEuPathDB" id="HostDB:geneid_396397"/>
<dbReference type="eggNOG" id="KOG0490">
    <property type="taxonomic scope" value="Eukaryota"/>
</dbReference>
<dbReference type="InParanoid" id="Q90881"/>
<dbReference type="OrthoDB" id="9990008at2759"/>
<dbReference type="PhylomeDB" id="Q90881"/>
<dbReference type="PRO" id="PR:Q90881"/>
<dbReference type="Proteomes" id="UP000000539">
    <property type="component" value="Unassembled WGS sequence"/>
</dbReference>
<dbReference type="GO" id="GO:0005634">
    <property type="term" value="C:nucleus"/>
    <property type="evidence" value="ECO:0000318"/>
    <property type="project" value="GO_Central"/>
</dbReference>
<dbReference type="GO" id="GO:0000981">
    <property type="term" value="F:DNA-binding transcription factor activity, RNA polymerase II-specific"/>
    <property type="evidence" value="ECO:0000318"/>
    <property type="project" value="GO_Central"/>
</dbReference>
<dbReference type="GO" id="GO:0046872">
    <property type="term" value="F:metal ion binding"/>
    <property type="evidence" value="ECO:0007669"/>
    <property type="project" value="UniProtKB-KW"/>
</dbReference>
<dbReference type="GO" id="GO:0000977">
    <property type="term" value="F:RNA polymerase II transcription regulatory region sequence-specific DNA binding"/>
    <property type="evidence" value="ECO:0000318"/>
    <property type="project" value="GO_Central"/>
</dbReference>
<dbReference type="GO" id="GO:0097380">
    <property type="term" value="P:dorsal spinal cord interneuron anterior axon guidance"/>
    <property type="evidence" value="ECO:0000314"/>
    <property type="project" value="UniProtKB"/>
</dbReference>
<dbReference type="GO" id="GO:0045892">
    <property type="term" value="P:negative regulation of DNA-templated transcription"/>
    <property type="evidence" value="ECO:0000314"/>
    <property type="project" value="UniProtKB"/>
</dbReference>
<dbReference type="GO" id="GO:0030182">
    <property type="term" value="P:neuron differentiation"/>
    <property type="evidence" value="ECO:0000318"/>
    <property type="project" value="GO_Central"/>
</dbReference>
<dbReference type="GO" id="GO:0006357">
    <property type="term" value="P:regulation of transcription by RNA polymerase II"/>
    <property type="evidence" value="ECO:0000318"/>
    <property type="project" value="GO_Central"/>
</dbReference>
<dbReference type="GO" id="GO:0021522">
    <property type="term" value="P:spinal cord motor neuron differentiation"/>
    <property type="evidence" value="ECO:0000270"/>
    <property type="project" value="UniProtKB"/>
</dbReference>
<dbReference type="CDD" id="cd00086">
    <property type="entry name" value="homeodomain"/>
    <property type="match status" value="1"/>
</dbReference>
<dbReference type="CDD" id="cd09469">
    <property type="entry name" value="LIM1_Lhx2"/>
    <property type="match status" value="1"/>
</dbReference>
<dbReference type="CDD" id="cd09377">
    <property type="entry name" value="LIM2_Lhx2_Lhx9"/>
    <property type="match status" value="1"/>
</dbReference>
<dbReference type="FunFam" id="1.10.10.60:FF:000027">
    <property type="entry name" value="LIM/homeobox protein Lhx9"/>
    <property type="match status" value="1"/>
</dbReference>
<dbReference type="FunFam" id="2.10.110.10:FF:000039">
    <property type="entry name" value="LIM/homeobox protein Lhx9 isoform 2"/>
    <property type="match status" value="1"/>
</dbReference>
<dbReference type="FunFam" id="2.10.110.10:FF:000033">
    <property type="entry name" value="LIM/homeobox protein Lhx9 isoform X2"/>
    <property type="match status" value="1"/>
</dbReference>
<dbReference type="Gene3D" id="2.10.110.10">
    <property type="entry name" value="Cysteine Rich Protein"/>
    <property type="match status" value="2"/>
</dbReference>
<dbReference type="Gene3D" id="1.10.10.60">
    <property type="entry name" value="Homeodomain-like"/>
    <property type="match status" value="1"/>
</dbReference>
<dbReference type="InterPro" id="IPR001356">
    <property type="entry name" value="HD"/>
</dbReference>
<dbReference type="InterPro" id="IPR017970">
    <property type="entry name" value="Homeobox_CS"/>
</dbReference>
<dbReference type="InterPro" id="IPR009057">
    <property type="entry name" value="Homeodomain-like_sf"/>
</dbReference>
<dbReference type="InterPro" id="IPR050453">
    <property type="entry name" value="LIM_Homeobox_TF"/>
</dbReference>
<dbReference type="InterPro" id="IPR001781">
    <property type="entry name" value="Znf_LIM"/>
</dbReference>
<dbReference type="PANTHER" id="PTHR24208">
    <property type="entry name" value="LIM/HOMEOBOX PROTEIN LHX"/>
    <property type="match status" value="1"/>
</dbReference>
<dbReference type="PANTHER" id="PTHR24208:SF95">
    <property type="entry name" value="LIM_HOMEOBOX PROTEIN LHX9"/>
    <property type="match status" value="1"/>
</dbReference>
<dbReference type="Pfam" id="PF00046">
    <property type="entry name" value="Homeodomain"/>
    <property type="match status" value="1"/>
</dbReference>
<dbReference type="Pfam" id="PF00412">
    <property type="entry name" value="LIM"/>
    <property type="match status" value="2"/>
</dbReference>
<dbReference type="SMART" id="SM00389">
    <property type="entry name" value="HOX"/>
    <property type="match status" value="1"/>
</dbReference>
<dbReference type="SMART" id="SM00132">
    <property type="entry name" value="LIM"/>
    <property type="match status" value="2"/>
</dbReference>
<dbReference type="SUPFAM" id="SSF57716">
    <property type="entry name" value="Glucocorticoid receptor-like (DNA-binding domain)"/>
    <property type="match status" value="2"/>
</dbReference>
<dbReference type="SUPFAM" id="SSF46689">
    <property type="entry name" value="Homeodomain-like"/>
    <property type="match status" value="1"/>
</dbReference>
<dbReference type="PROSITE" id="PS00027">
    <property type="entry name" value="HOMEOBOX_1"/>
    <property type="match status" value="1"/>
</dbReference>
<dbReference type="PROSITE" id="PS50071">
    <property type="entry name" value="HOMEOBOX_2"/>
    <property type="match status" value="1"/>
</dbReference>
<dbReference type="PROSITE" id="PS00478">
    <property type="entry name" value="LIM_DOMAIN_1"/>
    <property type="match status" value="2"/>
</dbReference>
<dbReference type="PROSITE" id="PS50023">
    <property type="entry name" value="LIM_DOMAIN_2"/>
    <property type="match status" value="2"/>
</dbReference>
<name>LHX9_CHICK</name>
<reference key="1">
    <citation type="journal article" date="1997" name="Biochem. Biophys. Res. Commun.">
        <title>Differential expression of the two closely related LIM-class homeobox genes LH-2A and LH-2B during limb development.</title>
        <authorList>
            <person name="Nohno T."/>
            <person name="Kawakami Y."/>
            <person name="Wada N."/>
            <person name="Ishikawa T."/>
            <person name="Ohuchi H."/>
            <person name="Noji S."/>
        </authorList>
    </citation>
    <scope>NUCLEOTIDE SEQUENCE [MRNA]</scope>
    <scope>DEVELOPMENTAL STAGE</scope>
    <source>
        <tissue>Embryo</tissue>
    </source>
</reference>